<dbReference type="EMBL" id="BX080631">
    <property type="status" value="NOT_ANNOTATED_CDS"/>
    <property type="molecule type" value="mRNA"/>
</dbReference>
<dbReference type="PIR" id="A27074">
    <property type="entry name" value="A27074"/>
</dbReference>
<dbReference type="SMR" id="P22647"/>
<dbReference type="iPTMnet" id="P22647"/>
<dbReference type="Proteomes" id="UP000694395">
    <property type="component" value="Unplaced"/>
</dbReference>
<dbReference type="GO" id="GO:0000786">
    <property type="term" value="C:nucleosome"/>
    <property type="evidence" value="ECO:0007669"/>
    <property type="project" value="UniProtKB-KW"/>
</dbReference>
<dbReference type="GO" id="GO:0005634">
    <property type="term" value="C:nucleus"/>
    <property type="evidence" value="ECO:0007669"/>
    <property type="project" value="UniProtKB-SubCell"/>
</dbReference>
<dbReference type="GO" id="GO:0003677">
    <property type="term" value="F:DNA binding"/>
    <property type="evidence" value="ECO:0007669"/>
    <property type="project" value="UniProtKB-KW"/>
</dbReference>
<dbReference type="GO" id="GO:0046982">
    <property type="term" value="F:protein heterodimerization activity"/>
    <property type="evidence" value="ECO:0007669"/>
    <property type="project" value="InterPro"/>
</dbReference>
<dbReference type="GO" id="GO:0030527">
    <property type="term" value="F:structural constituent of chromatin"/>
    <property type="evidence" value="ECO:0007669"/>
    <property type="project" value="InterPro"/>
</dbReference>
<dbReference type="CDD" id="cd00074">
    <property type="entry name" value="HFD_H2A"/>
    <property type="match status" value="1"/>
</dbReference>
<dbReference type="FunFam" id="1.10.20.10:FF:000005">
    <property type="entry name" value="Histone H2A"/>
    <property type="match status" value="1"/>
</dbReference>
<dbReference type="Gene3D" id="1.10.20.10">
    <property type="entry name" value="Histone, subunit A"/>
    <property type="match status" value="1"/>
</dbReference>
<dbReference type="InterPro" id="IPR009072">
    <property type="entry name" value="Histone-fold"/>
</dbReference>
<dbReference type="InterPro" id="IPR002119">
    <property type="entry name" value="Histone_H2A"/>
</dbReference>
<dbReference type="InterPro" id="IPR007125">
    <property type="entry name" value="Histone_H2A/H2B/H3"/>
</dbReference>
<dbReference type="InterPro" id="IPR032454">
    <property type="entry name" value="Histone_H2A_C"/>
</dbReference>
<dbReference type="InterPro" id="IPR032458">
    <property type="entry name" value="Histone_H2A_CS"/>
</dbReference>
<dbReference type="PANTHER" id="PTHR23430">
    <property type="entry name" value="HISTONE H2A"/>
    <property type="match status" value="1"/>
</dbReference>
<dbReference type="Pfam" id="PF00125">
    <property type="entry name" value="Histone"/>
    <property type="match status" value="1"/>
</dbReference>
<dbReference type="Pfam" id="PF16211">
    <property type="entry name" value="Histone_H2A_C"/>
    <property type="match status" value="1"/>
</dbReference>
<dbReference type="PRINTS" id="PR00620">
    <property type="entry name" value="HISTONEH2A"/>
</dbReference>
<dbReference type="SMART" id="SM00414">
    <property type="entry name" value="H2A"/>
    <property type="match status" value="1"/>
</dbReference>
<dbReference type="SUPFAM" id="SSF47113">
    <property type="entry name" value="Histone-fold"/>
    <property type="match status" value="1"/>
</dbReference>
<dbReference type="PROSITE" id="PS00046">
    <property type="entry name" value="HISTONE_H2A"/>
    <property type="match status" value="1"/>
</dbReference>
<feature type="initiator methionine" description="Removed" evidence="5">
    <location>
        <position position="1"/>
    </location>
</feature>
<feature type="chain" id="PRO_0000055304" description="Histone H2A.Z">
    <location>
        <begin position="2"/>
        <end position="128"/>
    </location>
</feature>
<feature type="region of interest" description="Disordered" evidence="4">
    <location>
        <begin position="1"/>
        <end position="25"/>
    </location>
</feature>
<feature type="region of interest" description="M6 cassette" evidence="1">
    <location>
        <begin position="89"/>
        <end position="100"/>
    </location>
</feature>
<feature type="compositionally biased region" description="Basic and acidic residues" evidence="4">
    <location>
        <begin position="1"/>
        <end position="12"/>
    </location>
</feature>
<feature type="modified residue" description="N6-acetyllysine" evidence="2">
    <location>
        <position position="5"/>
    </location>
</feature>
<feature type="modified residue" description="N6-acetyllysine" evidence="2">
    <location>
        <position position="8"/>
    </location>
</feature>
<feature type="modified residue" description="N6-acetyllysine; alternate" evidence="2">
    <location>
        <position position="12"/>
    </location>
</feature>
<feature type="modified residue" description="N6-lactoyllysine; alternate" evidence="2">
    <location>
        <position position="12"/>
    </location>
</feature>
<feature type="modified residue" description="N6-lactoyllysine" evidence="2">
    <location>
        <position position="14"/>
    </location>
</feature>
<feature type="modified residue" description="N6-lactoyllysine" evidence="2">
    <location>
        <position position="116"/>
    </location>
</feature>
<feature type="cross-link" description="Glycyl lysine isopeptide (Lys-Gly) (interchain with G-Cter in ubiquitin)" evidence="7">
    <location>
        <position position="122"/>
    </location>
</feature>
<feature type="sequence conflict" description="In Ref. 1; BX080631." evidence="6" ref="1">
    <original>A</original>
    <variation>T</variation>
    <location>
        <position position="13"/>
    </location>
</feature>
<feature type="sequence conflict" description="In Ref. 2; AA sequence." evidence="6" ref="2">
    <original>T</original>
    <variation>A</variation>
    <location>
        <position position="15"/>
    </location>
</feature>
<feature type="sequence conflict" description="In Ref. 1; BX080631." evidence="6" ref="1">
    <original>V</original>
    <variation>I</variation>
    <location>
        <position position="18"/>
    </location>
</feature>
<feature type="sequence conflict" description="In Ref. 2; AA sequence." evidence="6" ref="2">
    <original>G</original>
    <variation>V</variation>
    <location>
        <position position="31"/>
    </location>
</feature>
<sequence length="128" mass="13553">MAGGKAGKDSGKAKTKAVSRSQRAGLQFPVGRIHRHLKSRTTSHGRVGATAAVYSAAILEYLTAEVLELAGNASKDLKVKRITPRHLQLAIRGDEELDSLIKATIAGGGVIPHIHKSLIGKKGQQKTV</sequence>
<gene>
    <name type="primary">h2az1</name>
</gene>
<evidence type="ECO:0000250" key="1"/>
<evidence type="ECO:0000250" key="2">
    <source>
        <dbReference type="UniProtKB" id="P0C0S5"/>
    </source>
</evidence>
<evidence type="ECO:0000250" key="3">
    <source>
        <dbReference type="UniProtKB" id="P0C0S6"/>
    </source>
</evidence>
<evidence type="ECO:0000256" key="4">
    <source>
        <dbReference type="SAM" id="MobiDB-lite"/>
    </source>
</evidence>
<evidence type="ECO:0000269" key="5">
    <source>
    </source>
</evidence>
<evidence type="ECO:0000305" key="6"/>
<evidence type="ECO:0000305" key="7">
    <source>
    </source>
</evidence>
<reference key="1">
    <citation type="submission" date="2003-01" db="EMBL/GenBank/DDBJ databases">
        <title>Construction and primary characterization of normalized cDNA libraries in rainbow trout, Oncorhynchus mykiss.</title>
        <authorList>
            <person name="Govoroun M."/>
            <person name="Guiguen Y."/>
            <person name="Le Gac F."/>
        </authorList>
    </citation>
    <scope>NUCLEOTIDE SEQUENCE [MRNA]</scope>
    <source>
        <tissue>Testis</tissue>
    </source>
</reference>
<reference key="2">
    <citation type="journal article" date="1987" name="Biochemistry">
        <title>Changes in the histone H2A variant H2A.Z and polyubiquitinated histone species in developing trout testis.</title>
        <authorList>
            <person name="Nickel B.E."/>
            <person name="Roth S.Y."/>
            <person name="Cook R.G."/>
            <person name="Allis C.D."/>
            <person name="Davie J.R."/>
        </authorList>
    </citation>
    <scope>PROTEIN SEQUENCE OF 2-33</scope>
    <scope>UBIQUITINATION</scope>
</reference>
<organism>
    <name type="scientific">Oncorhynchus mykiss</name>
    <name type="common">Rainbow trout</name>
    <name type="synonym">Salmo gairdneri</name>
    <dbReference type="NCBI Taxonomy" id="8022"/>
    <lineage>
        <taxon>Eukaryota</taxon>
        <taxon>Metazoa</taxon>
        <taxon>Chordata</taxon>
        <taxon>Craniata</taxon>
        <taxon>Vertebrata</taxon>
        <taxon>Euteleostomi</taxon>
        <taxon>Actinopterygii</taxon>
        <taxon>Neopterygii</taxon>
        <taxon>Teleostei</taxon>
        <taxon>Protacanthopterygii</taxon>
        <taxon>Salmoniformes</taxon>
        <taxon>Salmonidae</taxon>
        <taxon>Salmoninae</taxon>
        <taxon>Oncorhynchus</taxon>
    </lineage>
</organism>
<name>H2AZ_ONCMY</name>
<proteinExistence type="evidence at protein level"/>
<protein>
    <recommendedName>
        <fullName>Histone H2A.Z</fullName>
        <shortName>H2A/z</shortName>
    </recommendedName>
</protein>
<keyword id="KW-0007">Acetylation</keyword>
<keyword id="KW-0158">Chromosome</keyword>
<keyword id="KW-0903">Direct protein sequencing</keyword>
<keyword id="KW-0238">DNA-binding</keyword>
<keyword id="KW-1017">Isopeptide bond</keyword>
<keyword id="KW-0544">Nucleosome core</keyword>
<keyword id="KW-0539">Nucleus</keyword>
<keyword id="KW-0832">Ubl conjugation</keyword>
<comment type="function">
    <text evidence="2 3">Variant histone H2A which replaces conventional H2A in a subset of nucleosomes. Nucleosomes wrap and compact DNA into chromatin, limiting DNA accessibility to the cellular machineries which require DNA as a template. Histones thereby play a central role in transcription regulation, DNA repair, DNA replication and chromosomal stability. DNA accessibility is regulated via a complex set of post-translational modifications of histones, also called histone code, and nucleosome remodeling (By similarity).</text>
</comment>
<comment type="subunit">
    <text evidence="1">The nucleosome is a histone octamer containing two molecules each of H2A, H2B, H3 and H4 assembled in one H3-H4 heterotetramer and two H2A-H2B heterodimers. The octamer wraps approximately 147 bp of DNA. H2A or its variant H2AZ1 forms a heterodimer with H2B (By similarity).</text>
</comment>
<comment type="subcellular location">
    <subcellularLocation>
        <location>Nucleus</location>
    </subcellularLocation>
    <subcellularLocation>
        <location>Chromosome</location>
    </subcellularLocation>
</comment>
<comment type="PTM">
    <text evidence="3">Acetylated on Lys-5, Lys-8 and Lys-12 during interphase. Acetylation disappears at mitosis (By similarity).</text>
</comment>
<comment type="similarity">
    <text evidence="6">Belongs to the histone H2A family.</text>
</comment>
<accession>P22647</accession>